<protein>
    <recommendedName>
        <fullName evidence="1">Small ribosomal subunit protein bS21</fullName>
    </recommendedName>
    <alternativeName>
        <fullName evidence="3">30S ribosomal protein S21</fullName>
    </alternativeName>
</protein>
<reference key="1">
    <citation type="journal article" date="2006" name="Proc. Natl. Acad. Sci. U.S.A.">
        <title>Molecular genetic anatomy of inter- and intraserotype variation in the human bacterial pathogen group A Streptococcus.</title>
        <authorList>
            <person name="Beres S.B."/>
            <person name="Richter E.W."/>
            <person name="Nagiec M.J."/>
            <person name="Sumby P."/>
            <person name="Porcella S.F."/>
            <person name="DeLeo F.R."/>
            <person name="Musser J.M."/>
        </authorList>
    </citation>
    <scope>NUCLEOTIDE SEQUENCE [LARGE SCALE GENOMIC DNA]</scope>
    <source>
        <strain>MGAS2096</strain>
    </source>
</reference>
<name>RS21_STRPB</name>
<proteinExistence type="inferred from homology"/>
<gene>
    <name evidence="1" type="primary">rpsU</name>
    <name type="ordered locus">MGAS2096_Spy0661</name>
</gene>
<accession>Q1JCJ5</accession>
<sequence>MSKTVVRKNESLDDALRRFKRSVTKAGTLQESRKREFYEKPSVKRKRKSEAARKRKKF</sequence>
<dbReference type="EMBL" id="CP000261">
    <property type="protein sequence ID" value="ABF35713.1"/>
    <property type="status" value="ALT_INIT"/>
    <property type="molecule type" value="Genomic_DNA"/>
</dbReference>
<dbReference type="SMR" id="Q1JCJ5"/>
<dbReference type="KEGG" id="spj:MGAS2096_Spy0661"/>
<dbReference type="HOGENOM" id="CLU_159258_3_2_9"/>
<dbReference type="GO" id="GO:1990904">
    <property type="term" value="C:ribonucleoprotein complex"/>
    <property type="evidence" value="ECO:0007669"/>
    <property type="project" value="UniProtKB-KW"/>
</dbReference>
<dbReference type="GO" id="GO:0005840">
    <property type="term" value="C:ribosome"/>
    <property type="evidence" value="ECO:0007669"/>
    <property type="project" value="UniProtKB-KW"/>
</dbReference>
<dbReference type="GO" id="GO:0003735">
    <property type="term" value="F:structural constituent of ribosome"/>
    <property type="evidence" value="ECO:0007669"/>
    <property type="project" value="InterPro"/>
</dbReference>
<dbReference type="GO" id="GO:0006412">
    <property type="term" value="P:translation"/>
    <property type="evidence" value="ECO:0007669"/>
    <property type="project" value="UniProtKB-UniRule"/>
</dbReference>
<dbReference type="Gene3D" id="1.20.5.1150">
    <property type="entry name" value="Ribosomal protein S8"/>
    <property type="match status" value="1"/>
</dbReference>
<dbReference type="HAMAP" id="MF_00358">
    <property type="entry name" value="Ribosomal_bS21"/>
    <property type="match status" value="1"/>
</dbReference>
<dbReference type="InterPro" id="IPR001911">
    <property type="entry name" value="Ribosomal_bS21"/>
</dbReference>
<dbReference type="InterPro" id="IPR018278">
    <property type="entry name" value="Ribosomal_bS21_CS"/>
</dbReference>
<dbReference type="InterPro" id="IPR038380">
    <property type="entry name" value="Ribosomal_bS21_sf"/>
</dbReference>
<dbReference type="NCBIfam" id="TIGR00030">
    <property type="entry name" value="S21p"/>
    <property type="match status" value="1"/>
</dbReference>
<dbReference type="PANTHER" id="PTHR21109">
    <property type="entry name" value="MITOCHONDRIAL 28S RIBOSOMAL PROTEIN S21"/>
    <property type="match status" value="1"/>
</dbReference>
<dbReference type="PANTHER" id="PTHR21109:SF22">
    <property type="entry name" value="SMALL RIBOSOMAL SUBUNIT PROTEIN BS21"/>
    <property type="match status" value="1"/>
</dbReference>
<dbReference type="Pfam" id="PF01165">
    <property type="entry name" value="Ribosomal_S21"/>
    <property type="match status" value="1"/>
</dbReference>
<dbReference type="PRINTS" id="PR00976">
    <property type="entry name" value="RIBOSOMALS21"/>
</dbReference>
<dbReference type="PROSITE" id="PS01181">
    <property type="entry name" value="RIBOSOMAL_S21"/>
    <property type="match status" value="1"/>
</dbReference>
<organism>
    <name type="scientific">Streptococcus pyogenes serotype M12 (strain MGAS2096)</name>
    <dbReference type="NCBI Taxonomy" id="370553"/>
    <lineage>
        <taxon>Bacteria</taxon>
        <taxon>Bacillati</taxon>
        <taxon>Bacillota</taxon>
        <taxon>Bacilli</taxon>
        <taxon>Lactobacillales</taxon>
        <taxon>Streptococcaceae</taxon>
        <taxon>Streptococcus</taxon>
    </lineage>
</organism>
<feature type="chain" id="PRO_0000266777" description="Small ribosomal subunit protein bS21">
    <location>
        <begin position="1"/>
        <end position="58"/>
    </location>
</feature>
<feature type="region of interest" description="Disordered" evidence="2">
    <location>
        <begin position="36"/>
        <end position="58"/>
    </location>
</feature>
<feature type="compositionally biased region" description="Basic residues" evidence="2">
    <location>
        <begin position="43"/>
        <end position="58"/>
    </location>
</feature>
<keyword id="KW-0687">Ribonucleoprotein</keyword>
<keyword id="KW-0689">Ribosomal protein</keyword>
<evidence type="ECO:0000255" key="1">
    <source>
        <dbReference type="HAMAP-Rule" id="MF_00358"/>
    </source>
</evidence>
<evidence type="ECO:0000256" key="2">
    <source>
        <dbReference type="SAM" id="MobiDB-lite"/>
    </source>
</evidence>
<evidence type="ECO:0000305" key="3"/>
<comment type="similarity">
    <text evidence="1">Belongs to the bacterial ribosomal protein bS21 family.</text>
</comment>
<comment type="sequence caution" evidence="3">
    <conflict type="erroneous initiation">
        <sequence resource="EMBL-CDS" id="ABF35713"/>
    </conflict>
</comment>